<accession>A5UIZ0</accession>
<comment type="function">
    <text evidence="1">Is the main repressor of the genes involved in the de novo synthesis of purine nucleotides, regulating purB, purC, purEK, purF, purHD, purL, purMN and guaBA expression. PurR is allosterically activated to bind its cognate DNA by binding the purine corepressors, hypoxanthine or guanine, thereby effecting transcription repression.</text>
</comment>
<comment type="pathway">
    <text>Purine metabolism; purine nucleotide biosynthesis [regulation].</text>
</comment>
<comment type="subunit">
    <text evidence="1">Homodimer.</text>
</comment>
<comment type="domain">
    <text evidence="1">Consists of two structural and functional domains: an N-terminal DNA-binding domain, approximately the first 60 residues, and a larger C-terminal domain, approximately 280 residues, which imparts the function of corepressor binding and oligomerization.</text>
</comment>
<reference key="1">
    <citation type="journal article" date="2007" name="Genome Biol.">
        <title>Characterization and modeling of the Haemophilus influenzae core and supragenomes based on the complete genomic sequences of Rd and 12 clinical nontypeable strains.</title>
        <authorList>
            <person name="Hogg J.S."/>
            <person name="Hu F.Z."/>
            <person name="Janto B."/>
            <person name="Boissy R."/>
            <person name="Hayes J."/>
            <person name="Keefe R."/>
            <person name="Post J.C."/>
            <person name="Ehrlich G.D."/>
        </authorList>
    </citation>
    <scope>NUCLEOTIDE SEQUENCE [LARGE SCALE GENOMIC DNA]</scope>
    <source>
        <strain>PittGG</strain>
    </source>
</reference>
<organism>
    <name type="scientific">Haemophilus influenzae (strain PittGG)</name>
    <dbReference type="NCBI Taxonomy" id="374931"/>
    <lineage>
        <taxon>Bacteria</taxon>
        <taxon>Pseudomonadati</taxon>
        <taxon>Pseudomonadota</taxon>
        <taxon>Gammaproteobacteria</taxon>
        <taxon>Pasteurellales</taxon>
        <taxon>Pasteurellaceae</taxon>
        <taxon>Haemophilus</taxon>
    </lineage>
</organism>
<keyword id="KW-0238">DNA-binding</keyword>
<keyword id="KW-0658">Purine biosynthesis</keyword>
<keyword id="KW-0678">Repressor</keyword>
<keyword id="KW-0804">Transcription</keyword>
<keyword id="KW-0805">Transcription regulation</keyword>
<proteinExistence type="inferred from homology"/>
<gene>
    <name evidence="1" type="primary">purR</name>
    <name type="ordered locus">CGSHiGG_09905</name>
</gene>
<dbReference type="EMBL" id="CP000672">
    <property type="protein sequence ID" value="ABR00746.1"/>
    <property type="molecule type" value="Genomic_DNA"/>
</dbReference>
<dbReference type="SMR" id="A5UIZ0"/>
<dbReference type="KEGG" id="hiq:CGSHiGG_09905"/>
<dbReference type="HOGENOM" id="CLU_037628_6_1_6"/>
<dbReference type="UniPathway" id="UPA00488"/>
<dbReference type="Proteomes" id="UP000001990">
    <property type="component" value="Chromosome"/>
</dbReference>
<dbReference type="GO" id="GO:0003700">
    <property type="term" value="F:DNA-binding transcription factor activity"/>
    <property type="evidence" value="ECO:0007669"/>
    <property type="project" value="TreeGrafter"/>
</dbReference>
<dbReference type="GO" id="GO:0000976">
    <property type="term" value="F:transcription cis-regulatory region binding"/>
    <property type="evidence" value="ECO:0007669"/>
    <property type="project" value="TreeGrafter"/>
</dbReference>
<dbReference type="GO" id="GO:0045892">
    <property type="term" value="P:negative regulation of DNA-templated transcription"/>
    <property type="evidence" value="ECO:0007669"/>
    <property type="project" value="UniProtKB-UniRule"/>
</dbReference>
<dbReference type="GO" id="GO:0006164">
    <property type="term" value="P:purine nucleotide biosynthetic process"/>
    <property type="evidence" value="ECO:0007669"/>
    <property type="project" value="UniProtKB-UniPathway"/>
</dbReference>
<dbReference type="CDD" id="cd01392">
    <property type="entry name" value="HTH_LacI"/>
    <property type="match status" value="1"/>
</dbReference>
<dbReference type="CDD" id="cd06275">
    <property type="entry name" value="PBP1_PurR"/>
    <property type="match status" value="1"/>
</dbReference>
<dbReference type="FunFam" id="1.10.260.40:FF:000002">
    <property type="entry name" value="HTH-type transcriptional repressor PurR"/>
    <property type="match status" value="1"/>
</dbReference>
<dbReference type="Gene3D" id="3.40.50.2300">
    <property type="match status" value="2"/>
</dbReference>
<dbReference type="Gene3D" id="1.10.260.40">
    <property type="entry name" value="lambda repressor-like DNA-binding domains"/>
    <property type="match status" value="1"/>
</dbReference>
<dbReference type="HAMAP" id="MF_01277">
    <property type="entry name" value="HTH_type_PurR"/>
    <property type="match status" value="1"/>
</dbReference>
<dbReference type="InterPro" id="IPR000843">
    <property type="entry name" value="HTH_LacI"/>
</dbReference>
<dbReference type="InterPro" id="IPR046335">
    <property type="entry name" value="LacI/GalR-like_sensor"/>
</dbReference>
<dbReference type="InterPro" id="IPR010982">
    <property type="entry name" value="Lambda_DNA-bd_dom_sf"/>
</dbReference>
<dbReference type="InterPro" id="IPR028082">
    <property type="entry name" value="Peripla_BP_I"/>
</dbReference>
<dbReference type="InterPro" id="IPR023588">
    <property type="entry name" value="Tscrpt_reg_HTH_PurR"/>
</dbReference>
<dbReference type="NCBIfam" id="NF007979">
    <property type="entry name" value="PRK10703.1"/>
    <property type="match status" value="1"/>
</dbReference>
<dbReference type="PANTHER" id="PTHR30146:SF148">
    <property type="entry name" value="HTH-TYPE TRANSCRIPTIONAL REPRESSOR PURR-RELATED"/>
    <property type="match status" value="1"/>
</dbReference>
<dbReference type="PANTHER" id="PTHR30146">
    <property type="entry name" value="LACI-RELATED TRANSCRIPTIONAL REPRESSOR"/>
    <property type="match status" value="1"/>
</dbReference>
<dbReference type="Pfam" id="PF00356">
    <property type="entry name" value="LacI"/>
    <property type="match status" value="1"/>
</dbReference>
<dbReference type="Pfam" id="PF13377">
    <property type="entry name" value="Peripla_BP_3"/>
    <property type="match status" value="1"/>
</dbReference>
<dbReference type="PRINTS" id="PR00036">
    <property type="entry name" value="HTHLACI"/>
</dbReference>
<dbReference type="SMART" id="SM00354">
    <property type="entry name" value="HTH_LACI"/>
    <property type="match status" value="1"/>
</dbReference>
<dbReference type="SUPFAM" id="SSF47413">
    <property type="entry name" value="lambda repressor-like DNA-binding domains"/>
    <property type="match status" value="1"/>
</dbReference>
<dbReference type="SUPFAM" id="SSF53822">
    <property type="entry name" value="Periplasmic binding protein-like I"/>
    <property type="match status" value="1"/>
</dbReference>
<dbReference type="PROSITE" id="PS00356">
    <property type="entry name" value="HTH_LACI_1"/>
    <property type="match status" value="1"/>
</dbReference>
<dbReference type="PROSITE" id="PS50932">
    <property type="entry name" value="HTH_LACI_2"/>
    <property type="match status" value="1"/>
</dbReference>
<sequence length="336" mass="37515">MATIKDVAKMAGVSTTTVSHVINKTRFVAKDTEEAVLSAIKQLNYSPSAVARSLKVNTTKSIGMIVTTSEAPYFAEIIHSVEEHCYRQGYSLFLCNTQNDPEKVKNHLEMLAKKRVDGLLVMCSEYTQDSLDLLSSFSTIPMVVMDWGPNANTDVIDDHSFDGGYLATKHLIECGHKKIGIICGELNKTTARTRYEGFEKAMEEAKLTINPSWVLEGAFEPEDGYECMNRLLTQEELPTALFCCNDVMALGAISALTEKCLRVPEDMSIIGYDDIHASRFYAPPLTTIHQSKLRLGRQAVNILLERITHKDEGVQQYSRIDITPELIIRKSVKSIL</sequence>
<name>PURR_HAEIG</name>
<protein>
    <recommendedName>
        <fullName evidence="1">HTH-type transcriptional repressor PurR</fullName>
    </recommendedName>
    <alternativeName>
        <fullName evidence="1">Pur regulon repressor</fullName>
    </alternativeName>
    <alternativeName>
        <fullName evidence="1">Purine nucleotide synthesis repressor</fullName>
    </alternativeName>
</protein>
<feature type="chain" id="PRO_1000085872" description="HTH-type transcriptional repressor PurR">
    <location>
        <begin position="1"/>
        <end position="336"/>
    </location>
</feature>
<feature type="domain" description="HTH lacI-type" evidence="1">
    <location>
        <begin position="2"/>
        <end position="56"/>
    </location>
</feature>
<feature type="DNA-binding region" description="H-T-H motif" evidence="1">
    <location>
        <begin position="4"/>
        <end position="23"/>
    </location>
</feature>
<feature type="DNA-binding region" evidence="1">
    <location>
        <begin position="48"/>
        <end position="56"/>
    </location>
</feature>
<feature type="binding site" evidence="1">
    <location>
        <position position="73"/>
    </location>
    <ligand>
        <name>hypoxanthine</name>
        <dbReference type="ChEBI" id="CHEBI:17368"/>
    </ligand>
</feature>
<feature type="binding site" evidence="1">
    <location>
        <position position="188"/>
    </location>
    <ligand>
        <name>hypoxanthine</name>
        <dbReference type="ChEBI" id="CHEBI:17368"/>
    </ligand>
</feature>
<feature type="binding site" evidence="1">
    <location>
        <position position="190"/>
    </location>
    <ligand>
        <name>hypoxanthine</name>
        <dbReference type="ChEBI" id="CHEBI:17368"/>
    </ligand>
</feature>
<feature type="binding site" evidence="1">
    <location>
        <position position="219"/>
    </location>
    <ligand>
        <name>hypoxanthine</name>
        <dbReference type="ChEBI" id="CHEBI:17368"/>
    </ligand>
</feature>
<feature type="binding site" evidence="1">
    <location>
        <position position="273"/>
    </location>
    <ligand>
        <name>hypoxanthine</name>
        <dbReference type="ChEBI" id="CHEBI:17368"/>
    </ligand>
</feature>
<evidence type="ECO:0000255" key="1">
    <source>
        <dbReference type="HAMAP-Rule" id="MF_01277"/>
    </source>
</evidence>